<comment type="function">
    <text evidence="1">Plays an important role in the de novo pathway of purine nucleotide biosynthesis. Catalyzes the first committed step in the biosynthesis of AMP from IMP.</text>
</comment>
<comment type="catalytic activity">
    <reaction evidence="1">
        <text>IMP + L-aspartate + GTP = N(6)-(1,2-dicarboxyethyl)-AMP + GDP + phosphate + 2 H(+)</text>
        <dbReference type="Rhea" id="RHEA:15753"/>
        <dbReference type="ChEBI" id="CHEBI:15378"/>
        <dbReference type="ChEBI" id="CHEBI:29991"/>
        <dbReference type="ChEBI" id="CHEBI:37565"/>
        <dbReference type="ChEBI" id="CHEBI:43474"/>
        <dbReference type="ChEBI" id="CHEBI:57567"/>
        <dbReference type="ChEBI" id="CHEBI:58053"/>
        <dbReference type="ChEBI" id="CHEBI:58189"/>
        <dbReference type="EC" id="6.3.4.4"/>
    </reaction>
</comment>
<comment type="cofactor">
    <cofactor evidence="1">
        <name>Mg(2+)</name>
        <dbReference type="ChEBI" id="CHEBI:18420"/>
    </cofactor>
    <text evidence="1">Binds 1 Mg(2+) ion per subunit.</text>
</comment>
<comment type="pathway">
    <text evidence="1">Purine metabolism; AMP biosynthesis via de novo pathway; AMP from IMP: step 1/2.</text>
</comment>
<comment type="subunit">
    <text evidence="1">Homodimer.</text>
</comment>
<comment type="subcellular location">
    <subcellularLocation>
        <location evidence="1">Cytoplasm</location>
    </subcellularLocation>
</comment>
<comment type="similarity">
    <text evidence="1">Belongs to the adenylosuccinate synthetase family.</text>
</comment>
<organism>
    <name type="scientific">Synechococcus sp. (strain WH7803)</name>
    <dbReference type="NCBI Taxonomy" id="32051"/>
    <lineage>
        <taxon>Bacteria</taxon>
        <taxon>Bacillati</taxon>
        <taxon>Cyanobacteriota</taxon>
        <taxon>Cyanophyceae</taxon>
        <taxon>Synechococcales</taxon>
        <taxon>Synechococcaceae</taxon>
        <taxon>Synechococcus</taxon>
    </lineage>
</organism>
<feature type="chain" id="PRO_1000000938" description="Adenylosuccinate synthetase">
    <location>
        <begin position="1"/>
        <end position="437"/>
    </location>
</feature>
<feature type="region of interest" description="Disordered" evidence="2">
    <location>
        <begin position="119"/>
        <end position="138"/>
    </location>
</feature>
<feature type="active site" description="Proton acceptor" evidence="1">
    <location>
        <position position="13"/>
    </location>
</feature>
<feature type="active site" description="Proton donor" evidence="1">
    <location>
        <position position="41"/>
    </location>
</feature>
<feature type="binding site" evidence="1">
    <location>
        <begin position="12"/>
        <end position="18"/>
    </location>
    <ligand>
        <name>GTP</name>
        <dbReference type="ChEBI" id="CHEBI:37565"/>
    </ligand>
</feature>
<feature type="binding site" description="in other chain" evidence="1">
    <location>
        <begin position="13"/>
        <end position="16"/>
    </location>
    <ligand>
        <name>IMP</name>
        <dbReference type="ChEBI" id="CHEBI:58053"/>
        <note>ligand shared between dimeric partners</note>
    </ligand>
</feature>
<feature type="binding site" evidence="1">
    <location>
        <position position="13"/>
    </location>
    <ligand>
        <name>Mg(2+)</name>
        <dbReference type="ChEBI" id="CHEBI:18420"/>
    </ligand>
</feature>
<feature type="binding site" description="in other chain" evidence="1">
    <location>
        <begin position="38"/>
        <end position="41"/>
    </location>
    <ligand>
        <name>IMP</name>
        <dbReference type="ChEBI" id="CHEBI:58053"/>
        <note>ligand shared between dimeric partners</note>
    </ligand>
</feature>
<feature type="binding site" evidence="1">
    <location>
        <begin position="40"/>
        <end position="42"/>
    </location>
    <ligand>
        <name>GTP</name>
        <dbReference type="ChEBI" id="CHEBI:37565"/>
    </ligand>
</feature>
<feature type="binding site" evidence="1">
    <location>
        <position position="40"/>
    </location>
    <ligand>
        <name>Mg(2+)</name>
        <dbReference type="ChEBI" id="CHEBI:18420"/>
    </ligand>
</feature>
<feature type="binding site" description="in other chain" evidence="1">
    <location>
        <position position="128"/>
    </location>
    <ligand>
        <name>IMP</name>
        <dbReference type="ChEBI" id="CHEBI:58053"/>
        <note>ligand shared between dimeric partners</note>
    </ligand>
</feature>
<feature type="binding site" evidence="1">
    <location>
        <position position="142"/>
    </location>
    <ligand>
        <name>IMP</name>
        <dbReference type="ChEBI" id="CHEBI:58053"/>
        <note>ligand shared between dimeric partners</note>
    </ligand>
</feature>
<feature type="binding site" description="in other chain" evidence="1">
    <location>
        <position position="223"/>
    </location>
    <ligand>
        <name>IMP</name>
        <dbReference type="ChEBI" id="CHEBI:58053"/>
        <note>ligand shared between dimeric partners</note>
    </ligand>
</feature>
<feature type="binding site" description="in other chain" evidence="1">
    <location>
        <position position="238"/>
    </location>
    <ligand>
        <name>IMP</name>
        <dbReference type="ChEBI" id="CHEBI:58053"/>
        <note>ligand shared between dimeric partners</note>
    </ligand>
</feature>
<feature type="binding site" evidence="1">
    <location>
        <begin position="298"/>
        <end position="304"/>
    </location>
    <ligand>
        <name>substrate</name>
    </ligand>
</feature>
<feature type="binding site" description="in other chain" evidence="1">
    <location>
        <position position="302"/>
    </location>
    <ligand>
        <name>IMP</name>
        <dbReference type="ChEBI" id="CHEBI:58053"/>
        <note>ligand shared between dimeric partners</note>
    </ligand>
</feature>
<feature type="binding site" evidence="1">
    <location>
        <position position="304"/>
    </location>
    <ligand>
        <name>GTP</name>
        <dbReference type="ChEBI" id="CHEBI:37565"/>
    </ligand>
</feature>
<feature type="binding site" evidence="1">
    <location>
        <begin position="330"/>
        <end position="332"/>
    </location>
    <ligand>
        <name>GTP</name>
        <dbReference type="ChEBI" id="CHEBI:37565"/>
    </ligand>
</feature>
<feature type="binding site" evidence="1">
    <location>
        <begin position="412"/>
        <end position="414"/>
    </location>
    <ligand>
        <name>GTP</name>
        <dbReference type="ChEBI" id="CHEBI:37565"/>
    </ligand>
</feature>
<keyword id="KW-0963">Cytoplasm</keyword>
<keyword id="KW-0342">GTP-binding</keyword>
<keyword id="KW-0436">Ligase</keyword>
<keyword id="KW-0460">Magnesium</keyword>
<keyword id="KW-0479">Metal-binding</keyword>
<keyword id="KW-0547">Nucleotide-binding</keyword>
<keyword id="KW-0658">Purine biosynthesis</keyword>
<keyword id="KW-1185">Reference proteome</keyword>
<dbReference type="EC" id="6.3.4.4" evidence="1"/>
<dbReference type="EMBL" id="CT971583">
    <property type="protein sequence ID" value="CAK23046.1"/>
    <property type="molecule type" value="Genomic_DNA"/>
</dbReference>
<dbReference type="SMR" id="A5GJD1"/>
<dbReference type="STRING" id="32051.SynWH7803_0620"/>
<dbReference type="KEGG" id="syx:SynWH7803_0620"/>
<dbReference type="eggNOG" id="COG0104">
    <property type="taxonomic scope" value="Bacteria"/>
</dbReference>
<dbReference type="HOGENOM" id="CLU_029848_0_0_3"/>
<dbReference type="OrthoDB" id="9807553at2"/>
<dbReference type="UniPathway" id="UPA00075">
    <property type="reaction ID" value="UER00335"/>
</dbReference>
<dbReference type="Proteomes" id="UP000001566">
    <property type="component" value="Chromosome"/>
</dbReference>
<dbReference type="GO" id="GO:0005737">
    <property type="term" value="C:cytoplasm"/>
    <property type="evidence" value="ECO:0007669"/>
    <property type="project" value="UniProtKB-SubCell"/>
</dbReference>
<dbReference type="GO" id="GO:0004019">
    <property type="term" value="F:adenylosuccinate synthase activity"/>
    <property type="evidence" value="ECO:0007669"/>
    <property type="project" value="UniProtKB-UniRule"/>
</dbReference>
<dbReference type="GO" id="GO:0005525">
    <property type="term" value="F:GTP binding"/>
    <property type="evidence" value="ECO:0007669"/>
    <property type="project" value="UniProtKB-UniRule"/>
</dbReference>
<dbReference type="GO" id="GO:0000287">
    <property type="term" value="F:magnesium ion binding"/>
    <property type="evidence" value="ECO:0007669"/>
    <property type="project" value="UniProtKB-UniRule"/>
</dbReference>
<dbReference type="GO" id="GO:0044208">
    <property type="term" value="P:'de novo' AMP biosynthetic process"/>
    <property type="evidence" value="ECO:0007669"/>
    <property type="project" value="UniProtKB-UniRule"/>
</dbReference>
<dbReference type="GO" id="GO:0046040">
    <property type="term" value="P:IMP metabolic process"/>
    <property type="evidence" value="ECO:0007669"/>
    <property type="project" value="TreeGrafter"/>
</dbReference>
<dbReference type="CDD" id="cd03108">
    <property type="entry name" value="AdSS"/>
    <property type="match status" value="1"/>
</dbReference>
<dbReference type="FunFam" id="1.10.300.10:FF:000001">
    <property type="entry name" value="Adenylosuccinate synthetase"/>
    <property type="match status" value="1"/>
</dbReference>
<dbReference type="FunFam" id="3.90.170.10:FF:000001">
    <property type="entry name" value="Adenylosuccinate synthetase"/>
    <property type="match status" value="1"/>
</dbReference>
<dbReference type="Gene3D" id="3.40.440.10">
    <property type="entry name" value="Adenylosuccinate Synthetase, subunit A, domain 1"/>
    <property type="match status" value="1"/>
</dbReference>
<dbReference type="Gene3D" id="1.10.300.10">
    <property type="entry name" value="Adenylosuccinate Synthetase, subunit A, domain 2"/>
    <property type="match status" value="1"/>
</dbReference>
<dbReference type="Gene3D" id="3.90.170.10">
    <property type="entry name" value="Adenylosuccinate Synthetase, subunit A, domain 3"/>
    <property type="match status" value="1"/>
</dbReference>
<dbReference type="HAMAP" id="MF_00011">
    <property type="entry name" value="Adenylosucc_synth"/>
    <property type="match status" value="1"/>
</dbReference>
<dbReference type="InterPro" id="IPR018220">
    <property type="entry name" value="Adenylosuccin_syn_GTP-bd"/>
</dbReference>
<dbReference type="InterPro" id="IPR033128">
    <property type="entry name" value="Adenylosuccin_syn_Lys_AS"/>
</dbReference>
<dbReference type="InterPro" id="IPR042109">
    <property type="entry name" value="Adenylosuccinate_synth_dom1"/>
</dbReference>
<dbReference type="InterPro" id="IPR042110">
    <property type="entry name" value="Adenylosuccinate_synth_dom2"/>
</dbReference>
<dbReference type="InterPro" id="IPR042111">
    <property type="entry name" value="Adenylosuccinate_synth_dom3"/>
</dbReference>
<dbReference type="InterPro" id="IPR001114">
    <property type="entry name" value="Adenylosuccinate_synthetase"/>
</dbReference>
<dbReference type="InterPro" id="IPR027417">
    <property type="entry name" value="P-loop_NTPase"/>
</dbReference>
<dbReference type="NCBIfam" id="NF002223">
    <property type="entry name" value="PRK01117.1"/>
    <property type="match status" value="1"/>
</dbReference>
<dbReference type="NCBIfam" id="TIGR00184">
    <property type="entry name" value="purA"/>
    <property type="match status" value="1"/>
</dbReference>
<dbReference type="PANTHER" id="PTHR11846">
    <property type="entry name" value="ADENYLOSUCCINATE SYNTHETASE"/>
    <property type="match status" value="1"/>
</dbReference>
<dbReference type="PANTHER" id="PTHR11846:SF0">
    <property type="entry name" value="ADENYLOSUCCINATE SYNTHETASE"/>
    <property type="match status" value="1"/>
</dbReference>
<dbReference type="Pfam" id="PF00709">
    <property type="entry name" value="Adenylsucc_synt"/>
    <property type="match status" value="1"/>
</dbReference>
<dbReference type="SMART" id="SM00788">
    <property type="entry name" value="Adenylsucc_synt"/>
    <property type="match status" value="1"/>
</dbReference>
<dbReference type="SUPFAM" id="SSF52540">
    <property type="entry name" value="P-loop containing nucleoside triphosphate hydrolases"/>
    <property type="match status" value="1"/>
</dbReference>
<dbReference type="PROSITE" id="PS01266">
    <property type="entry name" value="ADENYLOSUCCIN_SYN_1"/>
    <property type="match status" value="1"/>
</dbReference>
<dbReference type="PROSITE" id="PS00513">
    <property type="entry name" value="ADENYLOSUCCIN_SYN_2"/>
    <property type="match status" value="1"/>
</dbReference>
<name>PURA_SYNPW</name>
<protein>
    <recommendedName>
        <fullName evidence="1">Adenylosuccinate synthetase</fullName>
        <shortName evidence="1">AMPSase</shortName>
        <shortName evidence="1">AdSS</shortName>
        <ecNumber evidence="1">6.3.4.4</ecNumber>
    </recommendedName>
    <alternativeName>
        <fullName evidence="1">IMP--aspartate ligase</fullName>
    </alternativeName>
</protein>
<accession>A5GJD1</accession>
<proteinExistence type="inferred from homology"/>
<reference key="1">
    <citation type="submission" date="2006-05" db="EMBL/GenBank/DDBJ databases">
        <authorList>
            <consortium name="Genoscope"/>
        </authorList>
    </citation>
    <scope>NUCLEOTIDE SEQUENCE [LARGE SCALE GENOMIC DNA]</scope>
    <source>
        <strain>WH7803</strain>
    </source>
</reference>
<gene>
    <name evidence="1" type="primary">purA</name>
    <name type="ordered locus">SynWH7803_0620</name>
</gene>
<sequence length="437" mass="47476">MANVVVIGAQWGDEGKGKITDLLSRSADVVVRYQGGVNAGHTIVVDGQVLKLHLIPSGILYPDTICLIGSGTVVDPRVMLGELDMLIENGIDISGLQLASTAHVTMPYHRLLDQAMERQRGERRIGTTGRGIGPTYADKSQRSGIRVIDLLDEQRLRDRLEGPLQEKNQLLQTIYGMDPLNADEVIAEYLAYGKRLAPHVVDCSRAIHGAARNRKNILFEGAQGTLLDLDHGTYPYVTSSNPVSGGACIGAGVGPTLIDRVIGVAKAYTTRVGEGPFPTELDGSLNDHLCDRGGEFGTTTGRRRRCGWFDGVIGRYAVEVNGLDCLAVTKLDVLDEIDALQVCVAYELDGERIEHFPSCSEAFARCKPIYETLPGWQCSTADCRRLEDLPEKAMAYLRFLADLMEVPIAIVSLGASRDQTIVVEDPIHGPKRALLSA</sequence>
<evidence type="ECO:0000255" key="1">
    <source>
        <dbReference type="HAMAP-Rule" id="MF_00011"/>
    </source>
</evidence>
<evidence type="ECO:0000256" key="2">
    <source>
        <dbReference type="SAM" id="MobiDB-lite"/>
    </source>
</evidence>